<keyword id="KW-0963">Cytoplasm</keyword>
<keyword id="KW-0378">Hydrolase</keyword>
<keyword id="KW-0479">Metal-binding</keyword>
<keyword id="KW-0547">Nucleotide-binding</keyword>
<keyword id="KW-1185">Reference proteome</keyword>
<reference key="1">
    <citation type="submission" date="2006-10" db="EMBL/GenBank/DDBJ databases">
        <title>Complete sequence of Methanosaeta thermophila PT.</title>
        <authorList>
            <consortium name="US DOE Joint Genome Institute"/>
            <person name="Copeland A."/>
            <person name="Lucas S."/>
            <person name="Lapidus A."/>
            <person name="Barry K."/>
            <person name="Detter J.C."/>
            <person name="Glavina del Rio T."/>
            <person name="Hammon N."/>
            <person name="Israni S."/>
            <person name="Pitluck S."/>
            <person name="Chain P."/>
            <person name="Malfatti S."/>
            <person name="Shin M."/>
            <person name="Vergez L."/>
            <person name="Schmutz J."/>
            <person name="Larimer F."/>
            <person name="Land M."/>
            <person name="Hauser L."/>
            <person name="Kyrpides N."/>
            <person name="Kim E."/>
            <person name="Smith K.S."/>
            <person name="Ingram-Smith C."/>
            <person name="Richardson P."/>
        </authorList>
    </citation>
    <scope>NUCLEOTIDE SEQUENCE [LARGE SCALE GENOMIC DNA]</scope>
    <source>
        <strain>DSM 6194 / JCM 14653 / NBRC 101360 / PT</strain>
    </source>
</reference>
<organism>
    <name type="scientific">Methanothrix thermoacetophila (strain DSM 6194 / JCM 14653 / NBRC 101360 / PT)</name>
    <name type="common">Methanosaeta thermophila</name>
    <dbReference type="NCBI Taxonomy" id="349307"/>
    <lineage>
        <taxon>Archaea</taxon>
        <taxon>Methanobacteriati</taxon>
        <taxon>Methanobacteriota</taxon>
        <taxon>Stenosarchaea group</taxon>
        <taxon>Methanomicrobia</taxon>
        <taxon>Methanotrichales</taxon>
        <taxon>Methanotrichaceae</taxon>
        <taxon>Methanothrix</taxon>
    </lineage>
</organism>
<name>SURE_METTP</name>
<comment type="function">
    <text evidence="1">Nucleotidase that shows phosphatase activity on nucleoside 5'-monophosphates.</text>
</comment>
<comment type="catalytic activity">
    <reaction evidence="1">
        <text>a ribonucleoside 5'-phosphate + H2O = a ribonucleoside + phosphate</text>
        <dbReference type="Rhea" id="RHEA:12484"/>
        <dbReference type="ChEBI" id="CHEBI:15377"/>
        <dbReference type="ChEBI" id="CHEBI:18254"/>
        <dbReference type="ChEBI" id="CHEBI:43474"/>
        <dbReference type="ChEBI" id="CHEBI:58043"/>
        <dbReference type="EC" id="3.1.3.5"/>
    </reaction>
</comment>
<comment type="cofactor">
    <cofactor evidence="1">
        <name>a divalent metal cation</name>
        <dbReference type="ChEBI" id="CHEBI:60240"/>
    </cofactor>
    <text evidence="1">Binds 1 divalent metal cation per subunit.</text>
</comment>
<comment type="subcellular location">
    <subcellularLocation>
        <location evidence="1">Cytoplasm</location>
    </subcellularLocation>
</comment>
<comment type="similarity">
    <text evidence="1">Belongs to the SurE nucleotidase family.</text>
</comment>
<feature type="chain" id="PRO_0000335299" description="5'-nucleotidase SurE">
    <location>
        <begin position="1"/>
        <end position="265"/>
    </location>
</feature>
<feature type="binding site" evidence="1">
    <location>
        <position position="9"/>
    </location>
    <ligand>
        <name>a divalent metal cation</name>
        <dbReference type="ChEBI" id="CHEBI:60240"/>
    </ligand>
</feature>
<feature type="binding site" evidence="1">
    <location>
        <position position="10"/>
    </location>
    <ligand>
        <name>a divalent metal cation</name>
        <dbReference type="ChEBI" id="CHEBI:60240"/>
    </ligand>
</feature>
<feature type="binding site" evidence="1">
    <location>
        <position position="40"/>
    </location>
    <ligand>
        <name>a divalent metal cation</name>
        <dbReference type="ChEBI" id="CHEBI:60240"/>
    </ligand>
</feature>
<feature type="binding site" evidence="1">
    <location>
        <position position="96"/>
    </location>
    <ligand>
        <name>a divalent metal cation</name>
        <dbReference type="ChEBI" id="CHEBI:60240"/>
    </ligand>
</feature>
<accession>A0B8M6</accession>
<evidence type="ECO:0000255" key="1">
    <source>
        <dbReference type="HAMAP-Rule" id="MF_00060"/>
    </source>
</evidence>
<proteinExistence type="inferred from homology"/>
<gene>
    <name evidence="1" type="primary">surE</name>
    <name type="ordered locus">Mthe_1272</name>
</gene>
<protein>
    <recommendedName>
        <fullName evidence="1">5'-nucleotidase SurE</fullName>
        <ecNumber evidence="1">3.1.3.5</ecNumber>
    </recommendedName>
    <alternativeName>
        <fullName evidence="1">Nucleoside 5'-monophosphate phosphohydrolase</fullName>
    </alternativeName>
</protein>
<sequence>MRRILVTNDDGIYAPGLRAAVRSVEDLGEVIAVAPSGQRSGVGRSVSVFEPLRMAEVNLDGKKAYAVSGTPTDSVILGIFVVMNGELPDLAVSGINVGENISTDTVTTSGTIGAAIEAASYGVPAIAASIQVADQGDKFDNNHSVEYKFDTAMNLLRRVASRVLERGMPVGVDILNINLPLNATEDTEIVVTRLARKIFKTAVEERRDPRGRPYYWIGGDLICSEREGTDVRAVYQEGKISVTPLTIDSTAKVDFGEIMDLLEVI</sequence>
<dbReference type="EC" id="3.1.3.5" evidence="1"/>
<dbReference type="EMBL" id="CP000477">
    <property type="protein sequence ID" value="ABK15050.1"/>
    <property type="molecule type" value="Genomic_DNA"/>
</dbReference>
<dbReference type="RefSeq" id="WP_011696442.1">
    <property type="nucleotide sequence ID" value="NC_008553.1"/>
</dbReference>
<dbReference type="SMR" id="A0B8M6"/>
<dbReference type="STRING" id="349307.Mthe_1272"/>
<dbReference type="GeneID" id="4461940"/>
<dbReference type="KEGG" id="mtp:Mthe_1272"/>
<dbReference type="HOGENOM" id="CLU_045192_1_3_2"/>
<dbReference type="OrthoDB" id="26873at2157"/>
<dbReference type="Proteomes" id="UP000000674">
    <property type="component" value="Chromosome"/>
</dbReference>
<dbReference type="GO" id="GO:0005737">
    <property type="term" value="C:cytoplasm"/>
    <property type="evidence" value="ECO:0007669"/>
    <property type="project" value="UniProtKB-SubCell"/>
</dbReference>
<dbReference type="GO" id="GO:0008253">
    <property type="term" value="F:5'-nucleotidase activity"/>
    <property type="evidence" value="ECO:0007669"/>
    <property type="project" value="UniProtKB-UniRule"/>
</dbReference>
<dbReference type="GO" id="GO:0046872">
    <property type="term" value="F:metal ion binding"/>
    <property type="evidence" value="ECO:0007669"/>
    <property type="project" value="UniProtKB-UniRule"/>
</dbReference>
<dbReference type="GO" id="GO:0000166">
    <property type="term" value="F:nucleotide binding"/>
    <property type="evidence" value="ECO:0007669"/>
    <property type="project" value="UniProtKB-KW"/>
</dbReference>
<dbReference type="Gene3D" id="3.40.1210.10">
    <property type="entry name" value="Survival protein SurE-like phosphatase/nucleotidase"/>
    <property type="match status" value="1"/>
</dbReference>
<dbReference type="HAMAP" id="MF_00060">
    <property type="entry name" value="SurE"/>
    <property type="match status" value="1"/>
</dbReference>
<dbReference type="InterPro" id="IPR030048">
    <property type="entry name" value="SurE"/>
</dbReference>
<dbReference type="InterPro" id="IPR002828">
    <property type="entry name" value="SurE-like_Pase/nucleotidase"/>
</dbReference>
<dbReference type="InterPro" id="IPR036523">
    <property type="entry name" value="SurE-like_sf"/>
</dbReference>
<dbReference type="NCBIfam" id="NF001490">
    <property type="entry name" value="PRK00346.1-4"/>
    <property type="match status" value="1"/>
</dbReference>
<dbReference type="NCBIfam" id="NF001491">
    <property type="entry name" value="PRK00346.2-1"/>
    <property type="match status" value="1"/>
</dbReference>
<dbReference type="NCBIfam" id="TIGR00087">
    <property type="entry name" value="surE"/>
    <property type="match status" value="1"/>
</dbReference>
<dbReference type="PANTHER" id="PTHR30457">
    <property type="entry name" value="5'-NUCLEOTIDASE SURE"/>
    <property type="match status" value="1"/>
</dbReference>
<dbReference type="PANTHER" id="PTHR30457:SF0">
    <property type="entry name" value="PHOSPHATASE, PUTATIVE (AFU_ORTHOLOGUE AFUA_4G01070)-RELATED"/>
    <property type="match status" value="1"/>
</dbReference>
<dbReference type="Pfam" id="PF01975">
    <property type="entry name" value="SurE"/>
    <property type="match status" value="1"/>
</dbReference>
<dbReference type="SUPFAM" id="SSF64167">
    <property type="entry name" value="SurE-like"/>
    <property type="match status" value="1"/>
</dbReference>